<proteinExistence type="inferred from homology"/>
<dbReference type="EC" id="2.8.1.13" evidence="1"/>
<dbReference type="EMBL" id="CP000285">
    <property type="protein sequence ID" value="ABE59791.1"/>
    <property type="molecule type" value="Genomic_DNA"/>
</dbReference>
<dbReference type="RefSeq" id="WP_011507737.1">
    <property type="nucleotide sequence ID" value="NC_007963.1"/>
</dbReference>
<dbReference type="SMR" id="Q1QUR7"/>
<dbReference type="STRING" id="290398.Csal_2444"/>
<dbReference type="GeneID" id="95335150"/>
<dbReference type="KEGG" id="csa:Csal_2444"/>
<dbReference type="eggNOG" id="COG0482">
    <property type="taxonomic scope" value="Bacteria"/>
</dbReference>
<dbReference type="HOGENOM" id="CLU_035188_1_0_6"/>
<dbReference type="OrthoDB" id="9800696at2"/>
<dbReference type="Proteomes" id="UP000000239">
    <property type="component" value="Chromosome"/>
</dbReference>
<dbReference type="GO" id="GO:0005737">
    <property type="term" value="C:cytoplasm"/>
    <property type="evidence" value="ECO:0007669"/>
    <property type="project" value="UniProtKB-SubCell"/>
</dbReference>
<dbReference type="GO" id="GO:0005524">
    <property type="term" value="F:ATP binding"/>
    <property type="evidence" value="ECO:0007669"/>
    <property type="project" value="UniProtKB-KW"/>
</dbReference>
<dbReference type="GO" id="GO:0000049">
    <property type="term" value="F:tRNA binding"/>
    <property type="evidence" value="ECO:0007669"/>
    <property type="project" value="UniProtKB-KW"/>
</dbReference>
<dbReference type="GO" id="GO:0103016">
    <property type="term" value="F:tRNA-uridine 2-sulfurtransferase activity"/>
    <property type="evidence" value="ECO:0007669"/>
    <property type="project" value="UniProtKB-EC"/>
</dbReference>
<dbReference type="GO" id="GO:0002143">
    <property type="term" value="P:tRNA wobble position uridine thiolation"/>
    <property type="evidence" value="ECO:0007669"/>
    <property type="project" value="TreeGrafter"/>
</dbReference>
<dbReference type="CDD" id="cd01998">
    <property type="entry name" value="MnmA_TRMU-like"/>
    <property type="match status" value="1"/>
</dbReference>
<dbReference type="FunFam" id="2.30.30.280:FF:000001">
    <property type="entry name" value="tRNA-specific 2-thiouridylase MnmA"/>
    <property type="match status" value="1"/>
</dbReference>
<dbReference type="FunFam" id="2.40.30.10:FF:000023">
    <property type="entry name" value="tRNA-specific 2-thiouridylase MnmA"/>
    <property type="match status" value="1"/>
</dbReference>
<dbReference type="FunFam" id="3.40.50.620:FF:000004">
    <property type="entry name" value="tRNA-specific 2-thiouridylase MnmA"/>
    <property type="match status" value="1"/>
</dbReference>
<dbReference type="Gene3D" id="2.30.30.280">
    <property type="entry name" value="Adenine nucleotide alpha hydrolases-like domains"/>
    <property type="match status" value="1"/>
</dbReference>
<dbReference type="Gene3D" id="3.40.50.620">
    <property type="entry name" value="HUPs"/>
    <property type="match status" value="1"/>
</dbReference>
<dbReference type="Gene3D" id="2.40.30.10">
    <property type="entry name" value="Translation factors"/>
    <property type="match status" value="1"/>
</dbReference>
<dbReference type="HAMAP" id="MF_00144">
    <property type="entry name" value="tRNA_thiouridyl_MnmA"/>
    <property type="match status" value="1"/>
</dbReference>
<dbReference type="InterPro" id="IPR004506">
    <property type="entry name" value="MnmA-like"/>
</dbReference>
<dbReference type="InterPro" id="IPR046885">
    <property type="entry name" value="MnmA-like_C"/>
</dbReference>
<dbReference type="InterPro" id="IPR046884">
    <property type="entry name" value="MnmA-like_central"/>
</dbReference>
<dbReference type="InterPro" id="IPR023382">
    <property type="entry name" value="MnmA-like_central_sf"/>
</dbReference>
<dbReference type="InterPro" id="IPR014729">
    <property type="entry name" value="Rossmann-like_a/b/a_fold"/>
</dbReference>
<dbReference type="NCBIfam" id="NF001138">
    <property type="entry name" value="PRK00143.1"/>
    <property type="match status" value="1"/>
</dbReference>
<dbReference type="NCBIfam" id="TIGR00420">
    <property type="entry name" value="trmU"/>
    <property type="match status" value="1"/>
</dbReference>
<dbReference type="PANTHER" id="PTHR11933:SF5">
    <property type="entry name" value="MITOCHONDRIAL TRNA-SPECIFIC 2-THIOURIDYLASE 1"/>
    <property type="match status" value="1"/>
</dbReference>
<dbReference type="PANTHER" id="PTHR11933">
    <property type="entry name" value="TRNA 5-METHYLAMINOMETHYL-2-THIOURIDYLATE -METHYLTRANSFERASE"/>
    <property type="match status" value="1"/>
</dbReference>
<dbReference type="Pfam" id="PF03054">
    <property type="entry name" value="tRNA_Me_trans"/>
    <property type="match status" value="1"/>
</dbReference>
<dbReference type="Pfam" id="PF20258">
    <property type="entry name" value="tRNA_Me_trans_C"/>
    <property type="match status" value="1"/>
</dbReference>
<dbReference type="Pfam" id="PF20259">
    <property type="entry name" value="tRNA_Me_trans_M"/>
    <property type="match status" value="1"/>
</dbReference>
<dbReference type="SUPFAM" id="SSF52402">
    <property type="entry name" value="Adenine nucleotide alpha hydrolases-like"/>
    <property type="match status" value="1"/>
</dbReference>
<feature type="chain" id="PRO_0000349581" description="tRNA-specific 2-thiouridylase MnmA">
    <location>
        <begin position="1"/>
        <end position="384"/>
    </location>
</feature>
<feature type="region of interest" description="Interaction with target base in tRNA" evidence="1">
    <location>
        <begin position="107"/>
        <end position="109"/>
    </location>
</feature>
<feature type="region of interest" description="Interaction with tRNA" evidence="1">
    <location>
        <begin position="158"/>
        <end position="160"/>
    </location>
</feature>
<feature type="region of interest" description="Interaction with tRNA" evidence="1">
    <location>
        <begin position="320"/>
        <end position="321"/>
    </location>
</feature>
<feature type="active site" description="Nucleophile" evidence="1">
    <location>
        <position position="112"/>
    </location>
</feature>
<feature type="active site" description="Cysteine persulfide intermediate" evidence="1">
    <location>
        <position position="208"/>
    </location>
</feature>
<feature type="binding site" evidence="1">
    <location>
        <begin position="21"/>
        <end position="28"/>
    </location>
    <ligand>
        <name>ATP</name>
        <dbReference type="ChEBI" id="CHEBI:30616"/>
    </ligand>
</feature>
<feature type="binding site" evidence="1">
    <location>
        <position position="47"/>
    </location>
    <ligand>
        <name>ATP</name>
        <dbReference type="ChEBI" id="CHEBI:30616"/>
    </ligand>
</feature>
<feature type="binding site" evidence="1">
    <location>
        <position position="136"/>
    </location>
    <ligand>
        <name>ATP</name>
        <dbReference type="ChEBI" id="CHEBI:30616"/>
    </ligand>
</feature>
<feature type="site" description="Interaction with tRNA" evidence="1">
    <location>
        <position position="137"/>
    </location>
</feature>
<feature type="site" description="Interaction with tRNA" evidence="1">
    <location>
        <position position="353"/>
    </location>
</feature>
<feature type="disulfide bond" description="Alternate" evidence="1">
    <location>
        <begin position="112"/>
        <end position="208"/>
    </location>
</feature>
<comment type="function">
    <text evidence="1">Catalyzes the 2-thiolation of uridine at the wobble position (U34) of tRNA, leading to the formation of s(2)U34.</text>
</comment>
<comment type="catalytic activity">
    <reaction evidence="1">
        <text>S-sulfanyl-L-cysteinyl-[protein] + uridine(34) in tRNA + AH2 + ATP = 2-thiouridine(34) in tRNA + L-cysteinyl-[protein] + A + AMP + diphosphate + H(+)</text>
        <dbReference type="Rhea" id="RHEA:47032"/>
        <dbReference type="Rhea" id="RHEA-COMP:10131"/>
        <dbReference type="Rhea" id="RHEA-COMP:11726"/>
        <dbReference type="Rhea" id="RHEA-COMP:11727"/>
        <dbReference type="Rhea" id="RHEA-COMP:11728"/>
        <dbReference type="ChEBI" id="CHEBI:13193"/>
        <dbReference type="ChEBI" id="CHEBI:15378"/>
        <dbReference type="ChEBI" id="CHEBI:17499"/>
        <dbReference type="ChEBI" id="CHEBI:29950"/>
        <dbReference type="ChEBI" id="CHEBI:30616"/>
        <dbReference type="ChEBI" id="CHEBI:33019"/>
        <dbReference type="ChEBI" id="CHEBI:61963"/>
        <dbReference type="ChEBI" id="CHEBI:65315"/>
        <dbReference type="ChEBI" id="CHEBI:87170"/>
        <dbReference type="ChEBI" id="CHEBI:456215"/>
        <dbReference type="EC" id="2.8.1.13"/>
    </reaction>
</comment>
<comment type="subcellular location">
    <subcellularLocation>
        <location evidence="1">Cytoplasm</location>
    </subcellularLocation>
</comment>
<comment type="similarity">
    <text evidence="1">Belongs to the MnmA/TRMU family.</text>
</comment>
<organism>
    <name type="scientific">Chromohalobacter salexigens (strain ATCC BAA-138 / DSM 3043 / CIP 106854 / NCIMB 13768 / 1H11)</name>
    <dbReference type="NCBI Taxonomy" id="290398"/>
    <lineage>
        <taxon>Bacteria</taxon>
        <taxon>Pseudomonadati</taxon>
        <taxon>Pseudomonadota</taxon>
        <taxon>Gammaproteobacteria</taxon>
        <taxon>Oceanospirillales</taxon>
        <taxon>Halomonadaceae</taxon>
        <taxon>Chromohalobacter</taxon>
    </lineage>
</organism>
<keyword id="KW-0067">ATP-binding</keyword>
<keyword id="KW-0963">Cytoplasm</keyword>
<keyword id="KW-1015">Disulfide bond</keyword>
<keyword id="KW-0547">Nucleotide-binding</keyword>
<keyword id="KW-1185">Reference proteome</keyword>
<keyword id="KW-0694">RNA-binding</keyword>
<keyword id="KW-0808">Transferase</keyword>
<keyword id="KW-0819">tRNA processing</keyword>
<keyword id="KW-0820">tRNA-binding</keyword>
<gene>
    <name evidence="1" type="primary">mnmA</name>
    <name type="ordered locus">Csal_2444</name>
</gene>
<accession>Q1QUR7</accession>
<reference key="1">
    <citation type="journal article" date="2011" name="Stand. Genomic Sci.">
        <title>Complete genome sequence of the halophilic and highly halotolerant Chromohalobacter salexigens type strain (1H11(T)).</title>
        <authorList>
            <person name="Copeland A."/>
            <person name="O'Connor K."/>
            <person name="Lucas S."/>
            <person name="Lapidus A."/>
            <person name="Berry K.W."/>
            <person name="Detter J.C."/>
            <person name="Del Rio T.G."/>
            <person name="Hammon N."/>
            <person name="Dalin E."/>
            <person name="Tice H."/>
            <person name="Pitluck S."/>
            <person name="Bruce D."/>
            <person name="Goodwin L."/>
            <person name="Han C."/>
            <person name="Tapia R."/>
            <person name="Saunders E."/>
            <person name="Schmutz J."/>
            <person name="Brettin T."/>
            <person name="Larimer F."/>
            <person name="Land M."/>
            <person name="Hauser L."/>
            <person name="Vargas C."/>
            <person name="Nieto J.J."/>
            <person name="Kyrpides N.C."/>
            <person name="Ivanova N."/>
            <person name="Goker M."/>
            <person name="Klenk H.P."/>
            <person name="Csonka L.N."/>
            <person name="Woyke T."/>
        </authorList>
    </citation>
    <scope>NUCLEOTIDE SEQUENCE [LARGE SCALE GENOMIC DNA]</scope>
    <source>
        <strain>ATCC BAA-138 / DSM 3043 / CIP 106854 / NCIMB 13768 / 1H11</strain>
    </source>
</reference>
<evidence type="ECO:0000255" key="1">
    <source>
        <dbReference type="HAMAP-Rule" id="MF_00144"/>
    </source>
</evidence>
<name>MNMA_CHRSD</name>
<protein>
    <recommendedName>
        <fullName evidence="1">tRNA-specific 2-thiouridylase MnmA</fullName>
        <ecNumber evidence="1">2.8.1.13</ecNumber>
    </recommendedName>
</protein>
<sequence length="384" mass="42168">MSHATGSRAAGATTACKVIVGMSGGVDSSVTALTLLEQGYAVEGLFMKNWDEDDGTEYCTAKEDLADAQAVCDTLGITLHTANFAAEYWDNVFEHFLAEYKAGRTPNPDILCNREIKFKVFLEYAEMLGAEKIATGHYVRQGWRDGHCRLLKGLDANKDQSYFLHAVPEVAIARTLFPVGEMEKSEVRAIAERHGLTTARKKDSTGICFIGERRFSDFLKQYLPAQPGVIETPEGEVIGEHMGLMYYTLGQRQGLGIGGLPNHPDAPWYVAAKDLERNVLIAVQGKHHPLLYTDSLSTEPVEWVAGQPPAPEARLQAKTRYRQQDVACHVRVLEDGGVEARFDEPQRAVTPGQSLVLYDGDICLGGGVIRSTWNHSEPRGDSAA</sequence>